<feature type="signal peptide" evidence="2">
    <location>
        <begin position="1"/>
        <end position="24"/>
    </location>
</feature>
<feature type="chain" id="PRO_5014296826" description="Protein DESIGUAL 3">
    <location>
        <begin position="25"/>
        <end position="184"/>
    </location>
</feature>
<feature type="transmembrane region" description="Helical" evidence="2">
    <location>
        <begin position="62"/>
        <end position="82"/>
    </location>
</feature>
<feature type="transmembrane region" description="Helical" evidence="2">
    <location>
        <begin position="99"/>
        <end position="119"/>
    </location>
</feature>
<feature type="transmembrane region" description="Helical" evidence="2">
    <location>
        <begin position="140"/>
        <end position="160"/>
    </location>
</feature>
<feature type="region of interest" description="Disordered" evidence="4">
    <location>
        <begin position="34"/>
        <end position="53"/>
    </location>
</feature>
<feature type="compositionally biased region" description="Basic residues" evidence="4">
    <location>
        <begin position="34"/>
        <end position="45"/>
    </location>
</feature>
<feature type="glycosylation site" description="N-linked (GlcNAc...) asparagine" evidence="3">
    <location>
        <position position="180"/>
    </location>
</feature>
<organism>
    <name type="scientific">Arabidopsis thaliana</name>
    <name type="common">Mouse-ear cress</name>
    <dbReference type="NCBI Taxonomy" id="3702"/>
    <lineage>
        <taxon>Eukaryota</taxon>
        <taxon>Viridiplantae</taxon>
        <taxon>Streptophyta</taxon>
        <taxon>Embryophyta</taxon>
        <taxon>Tracheophyta</taxon>
        <taxon>Spermatophyta</taxon>
        <taxon>Magnoliopsida</taxon>
        <taxon>eudicotyledons</taxon>
        <taxon>Gunneridae</taxon>
        <taxon>Pentapetalae</taxon>
        <taxon>rosids</taxon>
        <taxon>malvids</taxon>
        <taxon>Brassicales</taxon>
        <taxon>Brassicaceae</taxon>
        <taxon>Camelineae</taxon>
        <taxon>Arabidopsis</taxon>
    </lineage>
</organism>
<protein>
    <recommendedName>
        <fullName evidence="6">Protein DESIGUAL 3</fullName>
    </recommendedName>
</protein>
<evidence type="ECO:0000250" key="1">
    <source>
        <dbReference type="UniProtKB" id="Q9ZV57"/>
    </source>
</evidence>
<evidence type="ECO:0000255" key="2"/>
<evidence type="ECO:0000255" key="3">
    <source>
        <dbReference type="PROSITE-ProRule" id="PRU00498"/>
    </source>
</evidence>
<evidence type="ECO:0000256" key="4">
    <source>
        <dbReference type="SAM" id="MobiDB-lite"/>
    </source>
</evidence>
<evidence type="ECO:0000269" key="5">
    <source>
    </source>
</evidence>
<evidence type="ECO:0000303" key="6">
    <source>
    </source>
</evidence>
<evidence type="ECO:0000305" key="7"/>
<evidence type="ECO:0000312" key="8">
    <source>
        <dbReference type="Araport" id="AT1G11500"/>
    </source>
</evidence>
<evidence type="ECO:0000312" key="9">
    <source>
        <dbReference type="EMBL" id="AC011661"/>
    </source>
</evidence>
<sequence length="184" mass="20045">MESELGFLVSVVIICADITATVLGIEAEIAQSKAPHHHHQQHSRHSGSGCRRSPSDGAFAEGVAAMVLLFIVHVLANVLGGCTYIRSKQDFKRATANKILAVAFLVLSWIFFVVSYSTLMIGTLANSRTNRLCSLPHRWFFLIGGIFCLGHGVVTSAYYVSAIAAKKEDKENAQQENLANRSRA</sequence>
<comment type="function">
    <text evidence="5">Involved, partially redundantly with VCC/DEAL1 and DEAL2, to ensure bilateral symmetry development and early leaf margin patterning, probably via the regulation of auxin and CUC2 distribution.</text>
</comment>
<comment type="subcellular location">
    <subcellularLocation>
        <location evidence="1">Endoplasmic reticulum membrane</location>
        <topology evidence="2">Multi-pass membrane protein</topology>
    </subcellularLocation>
</comment>
<comment type="tissue specificity">
    <text evidence="5">Mainly expressed in roots, inflorescences and developing leaves, and, at low levels, in mature leaves.</text>
</comment>
<comment type="disruption phenotype">
    <text evidence="5">No visible phenotype (PubMed:29139551). The vcc-3 deal3-1 double mutant shows leaf asymmetry (PubMed:29139551). The vcc-3 deal2-1 deal3-1 triple mutant shows a strong leaf asymmetry (PubMed:29139551).</text>
</comment>
<comment type="similarity">
    <text evidence="7">Belongs to the DESIGUAL family.</text>
</comment>
<gene>
    <name evidence="6" type="primary">DEAL3</name>
    <name evidence="8" type="ordered locus">At1g11500</name>
    <name evidence="9" type="ORF">T23J18.31</name>
</gene>
<keyword id="KW-0217">Developmental protein</keyword>
<keyword id="KW-0256">Endoplasmic reticulum</keyword>
<keyword id="KW-0325">Glycoprotein</keyword>
<keyword id="KW-0472">Membrane</keyword>
<keyword id="KW-1185">Reference proteome</keyword>
<keyword id="KW-0732">Signal</keyword>
<keyword id="KW-0812">Transmembrane</keyword>
<keyword id="KW-1133">Transmembrane helix</keyword>
<reference key="1">
    <citation type="journal article" date="2000" name="Nature">
        <title>Sequence and analysis of chromosome 1 of the plant Arabidopsis thaliana.</title>
        <authorList>
            <person name="Theologis A."/>
            <person name="Ecker J.R."/>
            <person name="Palm C.J."/>
            <person name="Federspiel N.A."/>
            <person name="Kaul S."/>
            <person name="White O."/>
            <person name="Alonso J."/>
            <person name="Altafi H."/>
            <person name="Araujo R."/>
            <person name="Bowman C.L."/>
            <person name="Brooks S.Y."/>
            <person name="Buehler E."/>
            <person name="Chan A."/>
            <person name="Chao Q."/>
            <person name="Chen H."/>
            <person name="Cheuk R.F."/>
            <person name="Chin C.W."/>
            <person name="Chung M.K."/>
            <person name="Conn L."/>
            <person name="Conway A.B."/>
            <person name="Conway A.R."/>
            <person name="Creasy T.H."/>
            <person name="Dewar K."/>
            <person name="Dunn P."/>
            <person name="Etgu P."/>
            <person name="Feldblyum T.V."/>
            <person name="Feng J.-D."/>
            <person name="Fong B."/>
            <person name="Fujii C.Y."/>
            <person name="Gill J.E."/>
            <person name="Goldsmith A.D."/>
            <person name="Haas B."/>
            <person name="Hansen N.F."/>
            <person name="Hughes B."/>
            <person name="Huizar L."/>
            <person name="Hunter J.L."/>
            <person name="Jenkins J."/>
            <person name="Johnson-Hopson C."/>
            <person name="Khan S."/>
            <person name="Khaykin E."/>
            <person name="Kim C.J."/>
            <person name="Koo H.L."/>
            <person name="Kremenetskaia I."/>
            <person name="Kurtz D.B."/>
            <person name="Kwan A."/>
            <person name="Lam B."/>
            <person name="Langin-Hooper S."/>
            <person name="Lee A."/>
            <person name="Lee J.M."/>
            <person name="Lenz C.A."/>
            <person name="Li J.H."/>
            <person name="Li Y.-P."/>
            <person name="Lin X."/>
            <person name="Liu S.X."/>
            <person name="Liu Z.A."/>
            <person name="Luros J.S."/>
            <person name="Maiti R."/>
            <person name="Marziali A."/>
            <person name="Militscher J."/>
            <person name="Miranda M."/>
            <person name="Nguyen M."/>
            <person name="Nierman W.C."/>
            <person name="Osborne B.I."/>
            <person name="Pai G."/>
            <person name="Peterson J."/>
            <person name="Pham P.K."/>
            <person name="Rizzo M."/>
            <person name="Rooney T."/>
            <person name="Rowley D."/>
            <person name="Sakano H."/>
            <person name="Salzberg S.L."/>
            <person name="Schwartz J.R."/>
            <person name="Shinn P."/>
            <person name="Southwick A.M."/>
            <person name="Sun H."/>
            <person name="Tallon L.J."/>
            <person name="Tambunga G."/>
            <person name="Toriumi M.J."/>
            <person name="Town C.D."/>
            <person name="Utterback T."/>
            <person name="Van Aken S."/>
            <person name="Vaysberg M."/>
            <person name="Vysotskaia V.S."/>
            <person name="Walker M."/>
            <person name="Wu D."/>
            <person name="Yu G."/>
            <person name="Fraser C.M."/>
            <person name="Venter J.C."/>
            <person name="Davis R.W."/>
        </authorList>
    </citation>
    <scope>NUCLEOTIDE SEQUENCE [LARGE SCALE GENOMIC DNA]</scope>
    <source>
        <strain>cv. Columbia</strain>
    </source>
</reference>
<reference key="2">
    <citation type="journal article" date="2017" name="Plant J.">
        <title>Araport11: a complete reannotation of the Arabidopsis thaliana reference genome.</title>
        <authorList>
            <person name="Cheng C.Y."/>
            <person name="Krishnakumar V."/>
            <person name="Chan A.P."/>
            <person name="Thibaud-Nissen F."/>
            <person name="Schobel S."/>
            <person name="Town C.D."/>
        </authorList>
    </citation>
    <scope>GENOME REANNOTATION</scope>
    <source>
        <strain>cv. Columbia</strain>
    </source>
</reference>
<reference key="3">
    <citation type="submission" date="2007-01" db="EMBL/GenBank/DDBJ databases">
        <title>Arabidopsis ORF clones.</title>
        <authorList>
            <person name="Bautista V.R."/>
            <person name="Kim C.J."/>
            <person name="Chen H."/>
            <person name="Wu S.Y."/>
            <person name="De Los Reyes C."/>
            <person name="Ecker J.R."/>
        </authorList>
    </citation>
    <scope>NUCLEOTIDE SEQUENCE [LARGE SCALE MRNA]</scope>
    <source>
        <strain>cv. Columbia</strain>
    </source>
</reference>
<reference key="4">
    <citation type="journal article" date="2018" name="New Phytol.">
        <title>Members of the DEAL subfamily of the DUF1218 gene family are required for bilateral symmetry but not for dorsoventrality in Arabidopsis leaves.</title>
        <authorList>
            <person name="Wilson-Sanchez D."/>
            <person name="Martinez-Lopez S."/>
            <person name="Navarro-Cartagena S."/>
            <person name="Jover-Gil S."/>
            <person name="Micol J.L."/>
        </authorList>
    </citation>
    <scope>FUNCTION</scope>
    <scope>DISRUPTION PHENOTYPE</scope>
    <scope>TISSUE SPECIFICITY</scope>
    <scope>GENE FAMILY</scope>
    <scope>NOMENCLATURE</scope>
    <source>
        <strain>cv. Columbia</strain>
    </source>
</reference>
<dbReference type="EMBL" id="AC011661">
    <property type="status" value="NOT_ANNOTATED_CDS"/>
    <property type="molecule type" value="Genomic_DNA"/>
</dbReference>
<dbReference type="EMBL" id="CP002684">
    <property type="protein sequence ID" value="AEE28745.1"/>
    <property type="molecule type" value="Genomic_DNA"/>
</dbReference>
<dbReference type="EMBL" id="BT030045">
    <property type="protein sequence ID" value="ABN04783.1"/>
    <property type="molecule type" value="mRNA"/>
</dbReference>
<dbReference type="RefSeq" id="NP_172617.2">
    <property type="nucleotide sequence ID" value="NM_101023.3"/>
</dbReference>
<dbReference type="FunCoup" id="A2RVQ4">
    <property type="interactions" value="10"/>
</dbReference>
<dbReference type="GlyCosmos" id="A2RVQ4">
    <property type="glycosylation" value="1 site, No reported glycans"/>
</dbReference>
<dbReference type="GlyGen" id="A2RVQ4">
    <property type="glycosylation" value="1 site"/>
</dbReference>
<dbReference type="ProteomicsDB" id="183208"/>
<dbReference type="EnsemblPlants" id="AT1G11500.1">
    <property type="protein sequence ID" value="AT1G11500.1"/>
    <property type="gene ID" value="AT1G11500"/>
</dbReference>
<dbReference type="GeneID" id="837693"/>
<dbReference type="Gramene" id="AT1G11500.1">
    <property type="protein sequence ID" value="AT1G11500.1"/>
    <property type="gene ID" value="AT1G11500"/>
</dbReference>
<dbReference type="KEGG" id="ath:AT1G11500"/>
<dbReference type="Araport" id="AT1G11500"/>
<dbReference type="TAIR" id="AT1G11500">
    <property type="gene designation" value="DEAL3"/>
</dbReference>
<dbReference type="eggNOG" id="ENOG502RXRV">
    <property type="taxonomic scope" value="Eukaryota"/>
</dbReference>
<dbReference type="HOGENOM" id="CLU_103513_0_0_1"/>
<dbReference type="InParanoid" id="A2RVQ4"/>
<dbReference type="OrthoDB" id="1079493at2759"/>
<dbReference type="PhylomeDB" id="A2RVQ4"/>
<dbReference type="PRO" id="PR:A2RVQ4"/>
<dbReference type="Proteomes" id="UP000006548">
    <property type="component" value="Chromosome 1"/>
</dbReference>
<dbReference type="ExpressionAtlas" id="A2RVQ4">
    <property type="expression patterns" value="baseline"/>
</dbReference>
<dbReference type="GO" id="GO:0005789">
    <property type="term" value="C:endoplasmic reticulum membrane"/>
    <property type="evidence" value="ECO:0007669"/>
    <property type="project" value="UniProtKB-SubCell"/>
</dbReference>
<dbReference type="GO" id="GO:0009855">
    <property type="term" value="P:determination of bilateral symmetry"/>
    <property type="evidence" value="ECO:0000315"/>
    <property type="project" value="UniProtKB"/>
</dbReference>
<dbReference type="GO" id="GO:0048366">
    <property type="term" value="P:leaf development"/>
    <property type="evidence" value="ECO:0000315"/>
    <property type="project" value="UniProtKB"/>
</dbReference>
<dbReference type="InterPro" id="IPR009606">
    <property type="entry name" value="DEAL/Modifying_wall_lignin1/2"/>
</dbReference>
<dbReference type="InterPro" id="IPR052222">
    <property type="entry name" value="DESIGUAL"/>
</dbReference>
<dbReference type="PANTHER" id="PTHR31769">
    <property type="entry name" value="OS07G0462200 PROTEIN-RELATED"/>
    <property type="match status" value="1"/>
</dbReference>
<dbReference type="Pfam" id="PF06749">
    <property type="entry name" value="DUF1218"/>
    <property type="match status" value="1"/>
</dbReference>
<name>DEAL3_ARATH</name>
<accession>A2RVQ4</accession>
<proteinExistence type="evidence at transcript level"/>